<accession>B3EMN5</accession>
<proteinExistence type="inferred from homology"/>
<organism>
    <name type="scientific">Chlorobium phaeobacteroides (strain BS1)</name>
    <dbReference type="NCBI Taxonomy" id="331678"/>
    <lineage>
        <taxon>Bacteria</taxon>
        <taxon>Pseudomonadati</taxon>
        <taxon>Chlorobiota</taxon>
        <taxon>Chlorobiia</taxon>
        <taxon>Chlorobiales</taxon>
        <taxon>Chlorobiaceae</taxon>
        <taxon>Chlorobium/Pelodictyon group</taxon>
        <taxon>Chlorobium</taxon>
    </lineage>
</organism>
<comment type="catalytic activity">
    <reaction evidence="1">
        <text>tRNA(Leu) + L-leucine + ATP = L-leucyl-tRNA(Leu) + AMP + diphosphate</text>
        <dbReference type="Rhea" id="RHEA:11688"/>
        <dbReference type="Rhea" id="RHEA-COMP:9613"/>
        <dbReference type="Rhea" id="RHEA-COMP:9622"/>
        <dbReference type="ChEBI" id="CHEBI:30616"/>
        <dbReference type="ChEBI" id="CHEBI:33019"/>
        <dbReference type="ChEBI" id="CHEBI:57427"/>
        <dbReference type="ChEBI" id="CHEBI:78442"/>
        <dbReference type="ChEBI" id="CHEBI:78494"/>
        <dbReference type="ChEBI" id="CHEBI:456215"/>
        <dbReference type="EC" id="6.1.1.4"/>
    </reaction>
</comment>
<comment type="subcellular location">
    <subcellularLocation>
        <location evidence="1">Cytoplasm</location>
    </subcellularLocation>
</comment>
<comment type="similarity">
    <text evidence="1">Belongs to the class-I aminoacyl-tRNA synthetase family.</text>
</comment>
<protein>
    <recommendedName>
        <fullName evidence="1">Leucine--tRNA ligase</fullName>
        <ecNumber evidence="1">6.1.1.4</ecNumber>
    </recommendedName>
    <alternativeName>
        <fullName evidence="1">Leucyl-tRNA synthetase</fullName>
        <shortName evidence="1">LeuRS</shortName>
    </alternativeName>
</protein>
<name>SYL_CHLPB</name>
<gene>
    <name evidence="1" type="primary">leuS</name>
    <name type="ordered locus">Cphamn1_0551</name>
</gene>
<evidence type="ECO:0000255" key="1">
    <source>
        <dbReference type="HAMAP-Rule" id="MF_00049"/>
    </source>
</evidence>
<reference key="1">
    <citation type="submission" date="2008-06" db="EMBL/GenBank/DDBJ databases">
        <title>Complete sequence of Chlorobium phaeobacteroides BS1.</title>
        <authorList>
            <consortium name="US DOE Joint Genome Institute"/>
            <person name="Lucas S."/>
            <person name="Copeland A."/>
            <person name="Lapidus A."/>
            <person name="Glavina del Rio T."/>
            <person name="Dalin E."/>
            <person name="Tice H."/>
            <person name="Bruce D."/>
            <person name="Goodwin L."/>
            <person name="Pitluck S."/>
            <person name="Schmutz J."/>
            <person name="Larimer F."/>
            <person name="Land M."/>
            <person name="Hauser L."/>
            <person name="Kyrpides N."/>
            <person name="Ovchinnikova G."/>
            <person name="Li T."/>
            <person name="Liu Z."/>
            <person name="Zhao F."/>
            <person name="Overmann J."/>
            <person name="Bryant D.A."/>
            <person name="Richardson P."/>
        </authorList>
    </citation>
    <scope>NUCLEOTIDE SEQUENCE [LARGE SCALE GENOMIC DNA]</scope>
    <source>
        <strain>BS1</strain>
    </source>
</reference>
<feature type="chain" id="PRO_1000091304" description="Leucine--tRNA ligase">
    <location>
        <begin position="1"/>
        <end position="806"/>
    </location>
</feature>
<feature type="short sequence motif" description="'HIGH' region">
    <location>
        <begin position="40"/>
        <end position="51"/>
    </location>
</feature>
<feature type="short sequence motif" description="'KMSKS' region">
    <location>
        <begin position="576"/>
        <end position="580"/>
    </location>
</feature>
<feature type="binding site" evidence="1">
    <location>
        <position position="579"/>
    </location>
    <ligand>
        <name>ATP</name>
        <dbReference type="ChEBI" id="CHEBI:30616"/>
    </ligand>
</feature>
<dbReference type="EC" id="6.1.1.4" evidence="1"/>
<dbReference type="EMBL" id="CP001101">
    <property type="protein sequence ID" value="ACE03513.1"/>
    <property type="molecule type" value="Genomic_DNA"/>
</dbReference>
<dbReference type="SMR" id="B3EMN5"/>
<dbReference type="STRING" id="331678.Cphamn1_0551"/>
<dbReference type="KEGG" id="cpb:Cphamn1_0551"/>
<dbReference type="eggNOG" id="COG0495">
    <property type="taxonomic scope" value="Bacteria"/>
</dbReference>
<dbReference type="HOGENOM" id="CLU_004427_0_0_10"/>
<dbReference type="OrthoDB" id="9810365at2"/>
<dbReference type="GO" id="GO:0005829">
    <property type="term" value="C:cytosol"/>
    <property type="evidence" value="ECO:0007669"/>
    <property type="project" value="TreeGrafter"/>
</dbReference>
<dbReference type="GO" id="GO:0002161">
    <property type="term" value="F:aminoacyl-tRNA deacylase activity"/>
    <property type="evidence" value="ECO:0007669"/>
    <property type="project" value="InterPro"/>
</dbReference>
<dbReference type="GO" id="GO:0005524">
    <property type="term" value="F:ATP binding"/>
    <property type="evidence" value="ECO:0007669"/>
    <property type="project" value="UniProtKB-UniRule"/>
</dbReference>
<dbReference type="GO" id="GO:0004823">
    <property type="term" value="F:leucine-tRNA ligase activity"/>
    <property type="evidence" value="ECO:0007669"/>
    <property type="project" value="UniProtKB-UniRule"/>
</dbReference>
<dbReference type="GO" id="GO:0006429">
    <property type="term" value="P:leucyl-tRNA aminoacylation"/>
    <property type="evidence" value="ECO:0007669"/>
    <property type="project" value="UniProtKB-UniRule"/>
</dbReference>
<dbReference type="CDD" id="cd07958">
    <property type="entry name" value="Anticodon_Ia_Leu_BEm"/>
    <property type="match status" value="1"/>
</dbReference>
<dbReference type="CDD" id="cd00812">
    <property type="entry name" value="LeuRS_core"/>
    <property type="match status" value="1"/>
</dbReference>
<dbReference type="FunFam" id="3.40.50.620:FF:000056">
    <property type="entry name" value="Leucine--tRNA ligase"/>
    <property type="match status" value="1"/>
</dbReference>
<dbReference type="FunFam" id="3.40.50.620:FF:000077">
    <property type="entry name" value="Leucine--tRNA ligase"/>
    <property type="match status" value="1"/>
</dbReference>
<dbReference type="FunFam" id="1.10.730.10:FF:000011">
    <property type="entry name" value="Leucine--tRNA ligase chloroplastic/mitochondrial"/>
    <property type="match status" value="1"/>
</dbReference>
<dbReference type="Gene3D" id="3.10.20.590">
    <property type="match status" value="1"/>
</dbReference>
<dbReference type="Gene3D" id="3.40.50.620">
    <property type="entry name" value="HUPs"/>
    <property type="match status" value="2"/>
</dbReference>
<dbReference type="Gene3D" id="1.10.730.10">
    <property type="entry name" value="Isoleucyl-tRNA Synthetase, Domain 1"/>
    <property type="match status" value="2"/>
</dbReference>
<dbReference type="HAMAP" id="MF_00049_B">
    <property type="entry name" value="Leu_tRNA_synth_B"/>
    <property type="match status" value="1"/>
</dbReference>
<dbReference type="InterPro" id="IPR002300">
    <property type="entry name" value="aa-tRNA-synth_Ia"/>
</dbReference>
<dbReference type="InterPro" id="IPR002302">
    <property type="entry name" value="Leu-tRNA-ligase"/>
</dbReference>
<dbReference type="InterPro" id="IPR025709">
    <property type="entry name" value="Leu_tRNA-synth_edit"/>
</dbReference>
<dbReference type="InterPro" id="IPR013155">
    <property type="entry name" value="M/V/L/I-tRNA-synth_anticd-bd"/>
</dbReference>
<dbReference type="InterPro" id="IPR015413">
    <property type="entry name" value="Methionyl/Leucyl_tRNA_Synth"/>
</dbReference>
<dbReference type="InterPro" id="IPR014729">
    <property type="entry name" value="Rossmann-like_a/b/a_fold"/>
</dbReference>
<dbReference type="InterPro" id="IPR009080">
    <property type="entry name" value="tRNAsynth_Ia_anticodon-bd"/>
</dbReference>
<dbReference type="InterPro" id="IPR009008">
    <property type="entry name" value="Val/Leu/Ile-tRNA-synth_edit"/>
</dbReference>
<dbReference type="NCBIfam" id="TIGR00396">
    <property type="entry name" value="leuS_bact"/>
    <property type="match status" value="1"/>
</dbReference>
<dbReference type="PANTHER" id="PTHR43740:SF2">
    <property type="entry name" value="LEUCINE--TRNA LIGASE, MITOCHONDRIAL"/>
    <property type="match status" value="1"/>
</dbReference>
<dbReference type="PANTHER" id="PTHR43740">
    <property type="entry name" value="LEUCYL-TRNA SYNTHETASE"/>
    <property type="match status" value="1"/>
</dbReference>
<dbReference type="Pfam" id="PF08264">
    <property type="entry name" value="Anticodon_1"/>
    <property type="match status" value="1"/>
</dbReference>
<dbReference type="Pfam" id="PF00133">
    <property type="entry name" value="tRNA-synt_1"/>
    <property type="match status" value="1"/>
</dbReference>
<dbReference type="Pfam" id="PF13603">
    <property type="entry name" value="tRNA-synt_1_2"/>
    <property type="match status" value="1"/>
</dbReference>
<dbReference type="Pfam" id="PF09334">
    <property type="entry name" value="tRNA-synt_1g"/>
    <property type="match status" value="1"/>
</dbReference>
<dbReference type="PRINTS" id="PR00985">
    <property type="entry name" value="TRNASYNTHLEU"/>
</dbReference>
<dbReference type="SUPFAM" id="SSF47323">
    <property type="entry name" value="Anticodon-binding domain of a subclass of class I aminoacyl-tRNA synthetases"/>
    <property type="match status" value="1"/>
</dbReference>
<dbReference type="SUPFAM" id="SSF52374">
    <property type="entry name" value="Nucleotidylyl transferase"/>
    <property type="match status" value="1"/>
</dbReference>
<dbReference type="SUPFAM" id="SSF50677">
    <property type="entry name" value="ValRS/IleRS/LeuRS editing domain"/>
    <property type="match status" value="1"/>
</dbReference>
<keyword id="KW-0030">Aminoacyl-tRNA synthetase</keyword>
<keyword id="KW-0067">ATP-binding</keyword>
<keyword id="KW-0963">Cytoplasm</keyword>
<keyword id="KW-0436">Ligase</keyword>
<keyword id="KW-0547">Nucleotide-binding</keyword>
<keyword id="KW-0648">Protein biosynthesis</keyword>
<sequence>MRYDFQSIEKKWQAYWNEHQTFLTKETVDKPKYYVLDMFPYPSGSGLHVGHLEGYTATDIISRYKRSRGHNVLHPMGWDAFGLPAEQFAIKTGTHPKVITEKNVSSFKDTLMRMGFSYDWNREINTTDPGYYAWTQWIFLQLLDRGLAYTSEIDVNWCEELKTVLANEEVAEKVADGHAVVRKPLRQWVLKITAYAERLLSDLDLVDWPESVKQMQRNWIGRSEGVEIDFQLPCHRTSLKVYTTRPDTLFGATYLVISPEHPMAEKLATAEHLIEAKNYIEEAKRKTELERTGLQKEKTGVFTGSFAVNPANGQALPVWISDFVLTSYGTGAIMSVPAHDGRDWEFAKKFDLPIVEVIKSPHDVEEAVFEEKGSVCINSSNDDISLDGLPFETSFGVMADWLEKKGTGKRTVKYKLRDWIFSRQRYWGEPIPVKYYEDGTLRPESDLPLTLPDIEAYEPTTTGESPLANISEWLYGTDENGSFRRETNTMPQWAGSCWYYLRFIDPGNTEKPVDPKKEQYWMNVDLYVGGAEHAVLHLLYARFWHKVLFDLGVVSTKEPFQKLFNQGMILGEDNEKMSKSRGNVIPADQVLGSYGADAVRLYEMFLGPLEQVKPWNTNGIEGVSRFLSRVWRLIYPEPGSMAELNEAPLTEDLTRTMHKAVKKITDHTEQLKFNTAISEMMVFVNELHKSGSRNRTAVETLLLLLSPYAPHICEELWEAIGHDTSITEENWPLFDPALAADNEVTIAVQVNGKLRGTVTAPAGSPKNILLDSARKEESVRKFLDGMSIIKEVVVPDRLVNFVVKPG</sequence>